<reference key="1">
    <citation type="journal article" date="2007" name="PLoS ONE">
        <title>A glimpse of streptococcal toxic shock syndrome from comparative genomics of S. suis 2 Chinese isolates.</title>
        <authorList>
            <person name="Chen C."/>
            <person name="Tang J."/>
            <person name="Dong W."/>
            <person name="Wang C."/>
            <person name="Feng Y."/>
            <person name="Wang J."/>
            <person name="Zheng F."/>
            <person name="Pan X."/>
            <person name="Liu D."/>
            <person name="Li M."/>
            <person name="Song Y."/>
            <person name="Zhu X."/>
            <person name="Sun H."/>
            <person name="Feng T."/>
            <person name="Guo Z."/>
            <person name="Ju A."/>
            <person name="Ge J."/>
            <person name="Dong Y."/>
            <person name="Sun W."/>
            <person name="Jiang Y."/>
            <person name="Wang J."/>
            <person name="Yan J."/>
            <person name="Yang H."/>
            <person name="Wang X."/>
            <person name="Gao G.F."/>
            <person name="Yang R."/>
            <person name="Wang J."/>
            <person name="Yu J."/>
        </authorList>
    </citation>
    <scope>NUCLEOTIDE SEQUENCE [LARGE SCALE GENOMIC DNA]</scope>
    <source>
        <strain>98HAH33</strain>
    </source>
</reference>
<keyword id="KW-0687">Ribonucleoprotein</keyword>
<keyword id="KW-0689">Ribosomal protein</keyword>
<sequence length="60" mass="6452">MAQIKITLTKSPIGRKPEQRKTVVALGLGKLNSSVVKEDNPAILGMVNAISHLVTVEEVK</sequence>
<accession>A4VYR0</accession>
<dbReference type="EMBL" id="CP000408">
    <property type="protein sequence ID" value="ABP91249.1"/>
    <property type="molecule type" value="Genomic_DNA"/>
</dbReference>
<dbReference type="SMR" id="A4VYR0"/>
<dbReference type="KEGG" id="ssv:SSU98_0089"/>
<dbReference type="HOGENOM" id="CLU_131047_2_1_9"/>
<dbReference type="GO" id="GO:0022625">
    <property type="term" value="C:cytosolic large ribosomal subunit"/>
    <property type="evidence" value="ECO:0007669"/>
    <property type="project" value="TreeGrafter"/>
</dbReference>
<dbReference type="GO" id="GO:0003735">
    <property type="term" value="F:structural constituent of ribosome"/>
    <property type="evidence" value="ECO:0007669"/>
    <property type="project" value="InterPro"/>
</dbReference>
<dbReference type="GO" id="GO:0006412">
    <property type="term" value="P:translation"/>
    <property type="evidence" value="ECO:0007669"/>
    <property type="project" value="UniProtKB-UniRule"/>
</dbReference>
<dbReference type="CDD" id="cd01658">
    <property type="entry name" value="Ribosomal_L30"/>
    <property type="match status" value="1"/>
</dbReference>
<dbReference type="FunFam" id="3.30.1390.20:FF:000001">
    <property type="entry name" value="50S ribosomal protein L30"/>
    <property type="match status" value="1"/>
</dbReference>
<dbReference type="Gene3D" id="3.30.1390.20">
    <property type="entry name" value="Ribosomal protein L30, ferredoxin-like fold domain"/>
    <property type="match status" value="1"/>
</dbReference>
<dbReference type="HAMAP" id="MF_01371_B">
    <property type="entry name" value="Ribosomal_uL30_B"/>
    <property type="match status" value="1"/>
</dbReference>
<dbReference type="InterPro" id="IPR036919">
    <property type="entry name" value="Ribo_uL30_ferredoxin-like_sf"/>
</dbReference>
<dbReference type="InterPro" id="IPR005996">
    <property type="entry name" value="Ribosomal_uL30_bac-type"/>
</dbReference>
<dbReference type="InterPro" id="IPR018038">
    <property type="entry name" value="Ribosomal_uL30_CS"/>
</dbReference>
<dbReference type="InterPro" id="IPR016082">
    <property type="entry name" value="Ribosomal_uL30_ferredoxin-like"/>
</dbReference>
<dbReference type="NCBIfam" id="TIGR01308">
    <property type="entry name" value="rpmD_bact"/>
    <property type="match status" value="1"/>
</dbReference>
<dbReference type="PANTHER" id="PTHR15892:SF2">
    <property type="entry name" value="LARGE RIBOSOMAL SUBUNIT PROTEIN UL30M"/>
    <property type="match status" value="1"/>
</dbReference>
<dbReference type="PANTHER" id="PTHR15892">
    <property type="entry name" value="MITOCHONDRIAL RIBOSOMAL PROTEIN L30"/>
    <property type="match status" value="1"/>
</dbReference>
<dbReference type="Pfam" id="PF00327">
    <property type="entry name" value="Ribosomal_L30"/>
    <property type="match status" value="1"/>
</dbReference>
<dbReference type="PIRSF" id="PIRSF002211">
    <property type="entry name" value="Ribosomal_L30_bac-type"/>
    <property type="match status" value="1"/>
</dbReference>
<dbReference type="SUPFAM" id="SSF55129">
    <property type="entry name" value="Ribosomal protein L30p/L7e"/>
    <property type="match status" value="1"/>
</dbReference>
<dbReference type="PROSITE" id="PS00634">
    <property type="entry name" value="RIBOSOMAL_L30"/>
    <property type="match status" value="1"/>
</dbReference>
<organism>
    <name type="scientific">Streptococcus suis (strain 98HAH33)</name>
    <dbReference type="NCBI Taxonomy" id="391296"/>
    <lineage>
        <taxon>Bacteria</taxon>
        <taxon>Bacillati</taxon>
        <taxon>Bacillota</taxon>
        <taxon>Bacilli</taxon>
        <taxon>Lactobacillales</taxon>
        <taxon>Streptococcaceae</taxon>
        <taxon>Streptococcus</taxon>
    </lineage>
</organism>
<comment type="subunit">
    <text evidence="1">Part of the 50S ribosomal subunit.</text>
</comment>
<comment type="similarity">
    <text evidence="1">Belongs to the universal ribosomal protein uL30 family.</text>
</comment>
<gene>
    <name evidence="1" type="primary">rpmD</name>
    <name type="ordered locus">SSU98_0089</name>
</gene>
<feature type="chain" id="PRO_1000056118" description="Large ribosomal subunit protein uL30">
    <location>
        <begin position="1"/>
        <end position="60"/>
    </location>
</feature>
<protein>
    <recommendedName>
        <fullName evidence="1">Large ribosomal subunit protein uL30</fullName>
    </recommendedName>
    <alternativeName>
        <fullName evidence="2">50S ribosomal protein L30</fullName>
    </alternativeName>
</protein>
<proteinExistence type="inferred from homology"/>
<evidence type="ECO:0000255" key="1">
    <source>
        <dbReference type="HAMAP-Rule" id="MF_01371"/>
    </source>
</evidence>
<evidence type="ECO:0000305" key="2"/>
<name>RL30_STRS2</name>